<organism>
    <name type="scientific">Staphylococcus aureus (strain Mu3 / ATCC 700698)</name>
    <dbReference type="NCBI Taxonomy" id="418127"/>
    <lineage>
        <taxon>Bacteria</taxon>
        <taxon>Bacillati</taxon>
        <taxon>Bacillota</taxon>
        <taxon>Bacilli</taxon>
        <taxon>Bacillales</taxon>
        <taxon>Staphylococcaceae</taxon>
        <taxon>Staphylococcus</taxon>
    </lineage>
</organism>
<sequence>MKPLHLKLNNFGPFLKEEIDFSKIDNNELFLISGKTGSGKTMIFDAMTYALFGKASTEQREENDLRSHFADGKQPMSVTFEFQLNHRIYKVHRQGPYIKEGNTTKTNAKFDVFEMVDGKYEIRESKVISGTQFIIELLGVNADQFRQLFILPQGEFKRFLISNSREKQGILRTLFDSEKFEAIREILKEELKKEKAQIENRYQQIDLLWQEIESFDDDKIKGLLELATQQIDKLIENIPLLQARSKEILAFVNESKETAIKEYEIIEKKTLENNILKDNINQLNKNKIDFVQLKEQQPEIDEIEAKLKLLQDITNLLNYIENREKIETKIANSKKDISKTNNKILNLDCDKRNIDKEKKMLEENGDLIESKTSFIDKTRVLFNDINKYQQSYLNIECLITEGEQLGDELNNLIKGLEKVEDSIGNNESDYEKIIELNNAITNINNEINIIKENEKAKAELDKLLGSKQELENQINEETTIMKNLEIKLDHYDKSKLDLNDKESFISEIKSAVKIGDQCPICGNEIQDLGHHIDFDSIAKRQNEIKEIEANIHAIKSNIAVHNSEIKFVNEKISNINIKTQSDFSLEVLNKRLLENENALNNQRDLNKFIEQMKEEKDNLTLQIHNKQLRLNKNESELKLCRDLITEFETLSKYNNITNFEVDYKKYVQDVNQHQELSKEIEDKLMQLSQRKLIEQNNLNHYENQLETYNNDLELNEQSIEMEMSRLNLTDDNDINEIIAWRGEQEELEQKRDTYKKRYHEFEMEIARLESLTKDKELLDSDKLKDEYEQKKEKMNTLIDEYSAVHYQCQNNINKTQSIVSHINYLNQELKDQQEIFQLAEIVSGKNNKNLTLENFVLIYYLDQIIAQANLRLATMSDNRYQLIRREAVSHGLSGLEIDVFDLHSNKSRHISSLSGGETFQSSLALALGLSEIVQQQSGGISLESIFIDEGFGTLDQETLETALDTLLNLKSTGRMVGIISHVSELKNRIPLVLEVKSDQYQSSTRFKRN</sequence>
<gene>
    <name type="primary">sbcC</name>
    <name type="ordered locus">SAHV_1335</name>
</gene>
<feature type="chain" id="PRO_0000338466" description="Nuclease SbcCD subunit C">
    <location>
        <begin position="1"/>
        <end position="1009"/>
    </location>
</feature>
<feature type="coiled-coil region" evidence="2">
    <location>
        <begin position="176"/>
        <end position="364"/>
    </location>
</feature>
<feature type="coiled-coil region" evidence="2">
    <location>
        <begin position="401"/>
        <end position="501"/>
    </location>
</feature>
<feature type="coiled-coil region" evidence="2">
    <location>
        <begin position="535"/>
        <end position="805"/>
    </location>
</feature>
<feature type="binding site" evidence="2">
    <location>
        <begin position="34"/>
        <end position="41"/>
    </location>
    <ligand>
        <name>ATP</name>
        <dbReference type="ChEBI" id="CHEBI:30616"/>
    </ligand>
</feature>
<reference key="1">
    <citation type="journal article" date="2008" name="Antimicrob. Agents Chemother.">
        <title>Mutated response regulator graR is responsible for phenotypic conversion of Staphylococcus aureus from heterogeneous vancomycin-intermediate resistance to vancomycin-intermediate resistance.</title>
        <authorList>
            <person name="Neoh H.-M."/>
            <person name="Cui L."/>
            <person name="Yuzawa H."/>
            <person name="Takeuchi F."/>
            <person name="Matsuo M."/>
            <person name="Hiramatsu K."/>
        </authorList>
    </citation>
    <scope>NUCLEOTIDE SEQUENCE [LARGE SCALE GENOMIC DNA]</scope>
    <source>
        <strain>Mu3 / ATCC 700698</strain>
    </source>
</reference>
<dbReference type="EMBL" id="AP009324">
    <property type="protein sequence ID" value="BAF78218.1"/>
    <property type="molecule type" value="Genomic_DNA"/>
</dbReference>
<dbReference type="RefSeq" id="WP_000803135.1">
    <property type="nucleotide sequence ID" value="NC_009782.1"/>
</dbReference>
<dbReference type="SMR" id="A7X203"/>
<dbReference type="KEGG" id="saw:SAHV_1335"/>
<dbReference type="HOGENOM" id="CLU_004785_2_1_9"/>
<dbReference type="GO" id="GO:0005524">
    <property type="term" value="F:ATP binding"/>
    <property type="evidence" value="ECO:0007669"/>
    <property type="project" value="UniProtKB-KW"/>
</dbReference>
<dbReference type="GO" id="GO:0016887">
    <property type="term" value="F:ATP hydrolysis activity"/>
    <property type="evidence" value="ECO:0007669"/>
    <property type="project" value="InterPro"/>
</dbReference>
<dbReference type="GO" id="GO:0004519">
    <property type="term" value="F:endonuclease activity"/>
    <property type="evidence" value="ECO:0007669"/>
    <property type="project" value="UniProtKB-KW"/>
</dbReference>
<dbReference type="GO" id="GO:0004527">
    <property type="term" value="F:exonuclease activity"/>
    <property type="evidence" value="ECO:0007669"/>
    <property type="project" value="UniProtKB-KW"/>
</dbReference>
<dbReference type="GO" id="GO:0006310">
    <property type="term" value="P:DNA recombination"/>
    <property type="evidence" value="ECO:0007669"/>
    <property type="project" value="UniProtKB-KW"/>
</dbReference>
<dbReference type="GO" id="GO:0006260">
    <property type="term" value="P:DNA replication"/>
    <property type="evidence" value="ECO:0007669"/>
    <property type="project" value="UniProtKB-KW"/>
</dbReference>
<dbReference type="GO" id="GO:0006302">
    <property type="term" value="P:double-strand break repair"/>
    <property type="evidence" value="ECO:0007669"/>
    <property type="project" value="InterPro"/>
</dbReference>
<dbReference type="CDD" id="cd03279">
    <property type="entry name" value="ABC_sbcCD"/>
    <property type="match status" value="1"/>
</dbReference>
<dbReference type="Gene3D" id="3.40.50.300">
    <property type="entry name" value="P-loop containing nucleotide triphosphate hydrolases"/>
    <property type="match status" value="2"/>
</dbReference>
<dbReference type="InterPro" id="IPR027417">
    <property type="entry name" value="P-loop_NTPase"/>
</dbReference>
<dbReference type="InterPro" id="IPR038729">
    <property type="entry name" value="Rad50/SbcC_AAA"/>
</dbReference>
<dbReference type="InterPro" id="IPR053380">
    <property type="entry name" value="SbcCD_Nuclease_C"/>
</dbReference>
<dbReference type="NCBIfam" id="NF041751">
    <property type="entry name" value="sbcc_Staph"/>
    <property type="match status" value="1"/>
</dbReference>
<dbReference type="PANTHER" id="PTHR32114">
    <property type="entry name" value="ABC TRANSPORTER ABCH.3"/>
    <property type="match status" value="1"/>
</dbReference>
<dbReference type="PANTHER" id="PTHR32114:SF2">
    <property type="entry name" value="ABC TRANSPORTER ABCH.3"/>
    <property type="match status" value="1"/>
</dbReference>
<dbReference type="Pfam" id="PF13476">
    <property type="entry name" value="AAA_23"/>
    <property type="match status" value="1"/>
</dbReference>
<dbReference type="Pfam" id="PF13558">
    <property type="entry name" value="SbcC_Walker_B"/>
    <property type="match status" value="1"/>
</dbReference>
<dbReference type="SUPFAM" id="SSF52540">
    <property type="entry name" value="P-loop containing nucleoside triphosphate hydrolases"/>
    <property type="match status" value="2"/>
</dbReference>
<dbReference type="SUPFAM" id="SSF75712">
    <property type="entry name" value="Rad50 coiled-coil Zn hook"/>
    <property type="match status" value="1"/>
</dbReference>
<comment type="function">
    <text evidence="1">SbcCD cleaves DNA hairpin structures. These structures can inhibit DNA replication and are intermediates in certain DNA recombination reactions. The complex acts as a 3'-&gt;5' double strand exonuclease that can open hairpins. It also has a 5' single-strand endonuclease activity (By similarity).</text>
</comment>
<comment type="subunit">
    <text evidence="1">Heterodimer of SbcC and SbcD.</text>
</comment>
<comment type="similarity">
    <text evidence="3">Belongs to the SMC family. SbcC subfamily.</text>
</comment>
<protein>
    <recommendedName>
        <fullName>Nuclease SbcCD subunit C</fullName>
    </recommendedName>
</protein>
<keyword id="KW-0067">ATP-binding</keyword>
<keyword id="KW-0175">Coiled coil</keyword>
<keyword id="KW-0233">DNA recombination</keyword>
<keyword id="KW-0235">DNA replication</keyword>
<keyword id="KW-0255">Endonuclease</keyword>
<keyword id="KW-0269">Exonuclease</keyword>
<keyword id="KW-0378">Hydrolase</keyword>
<keyword id="KW-0540">Nuclease</keyword>
<keyword id="KW-0547">Nucleotide-binding</keyword>
<accession>A7X203</accession>
<evidence type="ECO:0000250" key="1"/>
<evidence type="ECO:0000255" key="2"/>
<evidence type="ECO:0000305" key="3"/>
<name>SBCC_STAA1</name>
<proteinExistence type="inferred from homology"/>